<gene>
    <name evidence="1" type="primary">rpsG</name>
    <name type="ordered locus">DvMF_0076</name>
</gene>
<protein>
    <recommendedName>
        <fullName evidence="1">Small ribosomal subunit protein uS7</fullName>
    </recommendedName>
    <alternativeName>
        <fullName evidence="2">30S ribosomal protein S7</fullName>
    </alternativeName>
</protein>
<name>RS7_NITV9</name>
<evidence type="ECO:0000255" key="1">
    <source>
        <dbReference type="HAMAP-Rule" id="MF_00480"/>
    </source>
</evidence>
<evidence type="ECO:0000305" key="2"/>
<feature type="chain" id="PRO_1000125933" description="Small ribosomal subunit protein uS7">
    <location>
        <begin position="1"/>
        <end position="156"/>
    </location>
</feature>
<dbReference type="EMBL" id="CP001197">
    <property type="protein sequence ID" value="ACL07037.1"/>
    <property type="molecule type" value="Genomic_DNA"/>
</dbReference>
<dbReference type="SMR" id="B8DN93"/>
<dbReference type="STRING" id="883.DvMF_0076"/>
<dbReference type="KEGG" id="dvm:DvMF_0076"/>
<dbReference type="eggNOG" id="COG0049">
    <property type="taxonomic scope" value="Bacteria"/>
</dbReference>
<dbReference type="HOGENOM" id="CLU_072226_1_1_7"/>
<dbReference type="OrthoDB" id="9807653at2"/>
<dbReference type="GO" id="GO:0015935">
    <property type="term" value="C:small ribosomal subunit"/>
    <property type="evidence" value="ECO:0007669"/>
    <property type="project" value="InterPro"/>
</dbReference>
<dbReference type="GO" id="GO:0019843">
    <property type="term" value="F:rRNA binding"/>
    <property type="evidence" value="ECO:0007669"/>
    <property type="project" value="UniProtKB-UniRule"/>
</dbReference>
<dbReference type="GO" id="GO:0003735">
    <property type="term" value="F:structural constituent of ribosome"/>
    <property type="evidence" value="ECO:0007669"/>
    <property type="project" value="InterPro"/>
</dbReference>
<dbReference type="GO" id="GO:0000049">
    <property type="term" value="F:tRNA binding"/>
    <property type="evidence" value="ECO:0007669"/>
    <property type="project" value="UniProtKB-UniRule"/>
</dbReference>
<dbReference type="GO" id="GO:0006412">
    <property type="term" value="P:translation"/>
    <property type="evidence" value="ECO:0007669"/>
    <property type="project" value="UniProtKB-UniRule"/>
</dbReference>
<dbReference type="CDD" id="cd14869">
    <property type="entry name" value="uS7_Bacteria"/>
    <property type="match status" value="1"/>
</dbReference>
<dbReference type="FunFam" id="1.10.455.10:FF:000001">
    <property type="entry name" value="30S ribosomal protein S7"/>
    <property type="match status" value="1"/>
</dbReference>
<dbReference type="Gene3D" id="1.10.455.10">
    <property type="entry name" value="Ribosomal protein S7 domain"/>
    <property type="match status" value="1"/>
</dbReference>
<dbReference type="HAMAP" id="MF_00480_B">
    <property type="entry name" value="Ribosomal_uS7_B"/>
    <property type="match status" value="1"/>
</dbReference>
<dbReference type="InterPro" id="IPR000235">
    <property type="entry name" value="Ribosomal_uS7"/>
</dbReference>
<dbReference type="InterPro" id="IPR005717">
    <property type="entry name" value="Ribosomal_uS7_bac/org-type"/>
</dbReference>
<dbReference type="InterPro" id="IPR020606">
    <property type="entry name" value="Ribosomal_uS7_CS"/>
</dbReference>
<dbReference type="InterPro" id="IPR023798">
    <property type="entry name" value="Ribosomal_uS7_dom"/>
</dbReference>
<dbReference type="InterPro" id="IPR036823">
    <property type="entry name" value="Ribosomal_uS7_dom_sf"/>
</dbReference>
<dbReference type="NCBIfam" id="TIGR01029">
    <property type="entry name" value="rpsG_bact"/>
    <property type="match status" value="1"/>
</dbReference>
<dbReference type="PANTHER" id="PTHR11205">
    <property type="entry name" value="RIBOSOMAL PROTEIN S7"/>
    <property type="match status" value="1"/>
</dbReference>
<dbReference type="Pfam" id="PF00177">
    <property type="entry name" value="Ribosomal_S7"/>
    <property type="match status" value="1"/>
</dbReference>
<dbReference type="PIRSF" id="PIRSF002122">
    <property type="entry name" value="RPS7p_RPS7a_RPS5e_RPS7o"/>
    <property type="match status" value="1"/>
</dbReference>
<dbReference type="SUPFAM" id="SSF47973">
    <property type="entry name" value="Ribosomal protein S7"/>
    <property type="match status" value="1"/>
</dbReference>
<dbReference type="PROSITE" id="PS00052">
    <property type="entry name" value="RIBOSOMAL_S7"/>
    <property type="match status" value="1"/>
</dbReference>
<organism>
    <name type="scientific">Nitratidesulfovibrio vulgaris (strain DSM 19637 / Miyazaki F)</name>
    <name type="common">Desulfovibrio vulgaris</name>
    <dbReference type="NCBI Taxonomy" id="883"/>
    <lineage>
        <taxon>Bacteria</taxon>
        <taxon>Pseudomonadati</taxon>
        <taxon>Thermodesulfobacteriota</taxon>
        <taxon>Desulfovibrionia</taxon>
        <taxon>Desulfovibrionales</taxon>
        <taxon>Desulfovibrionaceae</taxon>
        <taxon>Nitratidesulfovibrio</taxon>
    </lineage>
</organism>
<sequence length="156" mass="17772">MPRKGPVPRREILPDPVYNSRLAARFINRLMYDGKKGVAEKLFYKSLETLGEKTGEEPLKAFERAVESVKPHLEVKARRVGGATYQVPMDVRPDRQVSLAIRWLINYARSRGEKGMSAKLSAELIDAFNSRGGAVKKKEDTHRMAEANKAFAHYRW</sequence>
<accession>B8DN93</accession>
<comment type="function">
    <text evidence="1">One of the primary rRNA binding proteins, it binds directly to 16S rRNA where it nucleates assembly of the head domain of the 30S subunit. Is located at the subunit interface close to the decoding center, probably blocks exit of the E-site tRNA.</text>
</comment>
<comment type="subunit">
    <text evidence="1">Part of the 30S ribosomal subunit. Contacts proteins S9 and S11.</text>
</comment>
<comment type="similarity">
    <text evidence="1">Belongs to the universal ribosomal protein uS7 family.</text>
</comment>
<proteinExistence type="inferred from homology"/>
<keyword id="KW-0687">Ribonucleoprotein</keyword>
<keyword id="KW-0689">Ribosomal protein</keyword>
<keyword id="KW-0694">RNA-binding</keyword>
<keyword id="KW-0699">rRNA-binding</keyword>
<keyword id="KW-0820">tRNA-binding</keyword>
<reference key="1">
    <citation type="submission" date="2008-10" db="EMBL/GenBank/DDBJ databases">
        <title>Complete sequence of Desulfovibrio vulgaris str. 'Miyazaki F'.</title>
        <authorList>
            <person name="Lucas S."/>
            <person name="Copeland A."/>
            <person name="Lapidus A."/>
            <person name="Glavina del Rio T."/>
            <person name="Dalin E."/>
            <person name="Tice H."/>
            <person name="Bruce D."/>
            <person name="Goodwin L."/>
            <person name="Pitluck S."/>
            <person name="Sims D."/>
            <person name="Brettin T."/>
            <person name="Detter J.C."/>
            <person name="Han C."/>
            <person name="Larimer F."/>
            <person name="Land M."/>
            <person name="Hauser L."/>
            <person name="Kyrpides N."/>
            <person name="Mikhailova N."/>
            <person name="Hazen T.C."/>
            <person name="Richardson P."/>
        </authorList>
    </citation>
    <scope>NUCLEOTIDE SEQUENCE [LARGE SCALE GENOMIC DNA]</scope>
    <source>
        <strain>DSM 19637 / Miyazaki F</strain>
    </source>
</reference>